<name>BIOF_HERAR</name>
<feature type="chain" id="PRO_0000381010" description="8-amino-7-oxononanoate synthase">
    <location>
        <begin position="1"/>
        <end position="388"/>
    </location>
</feature>
<feature type="binding site" evidence="1">
    <location>
        <position position="20"/>
    </location>
    <ligand>
        <name>substrate</name>
    </ligand>
</feature>
<feature type="binding site" evidence="1">
    <location>
        <begin position="107"/>
        <end position="108"/>
    </location>
    <ligand>
        <name>pyridoxal 5'-phosphate</name>
        <dbReference type="ChEBI" id="CHEBI:597326"/>
    </ligand>
</feature>
<feature type="binding site" evidence="1">
    <location>
        <position position="132"/>
    </location>
    <ligand>
        <name>substrate</name>
    </ligand>
</feature>
<feature type="binding site" evidence="1">
    <location>
        <position position="178"/>
    </location>
    <ligand>
        <name>pyridoxal 5'-phosphate</name>
        <dbReference type="ChEBI" id="CHEBI:597326"/>
    </ligand>
</feature>
<feature type="binding site" evidence="1">
    <location>
        <position position="206"/>
    </location>
    <ligand>
        <name>pyridoxal 5'-phosphate</name>
        <dbReference type="ChEBI" id="CHEBI:597326"/>
    </ligand>
</feature>
<feature type="binding site" evidence="1">
    <location>
        <position position="237"/>
    </location>
    <ligand>
        <name>pyridoxal 5'-phosphate</name>
        <dbReference type="ChEBI" id="CHEBI:597326"/>
    </ligand>
</feature>
<feature type="binding site" evidence="1">
    <location>
        <position position="356"/>
    </location>
    <ligand>
        <name>substrate</name>
    </ligand>
</feature>
<feature type="modified residue" description="N6-(pyridoxal phosphate)lysine" evidence="1">
    <location>
        <position position="240"/>
    </location>
</feature>
<gene>
    <name evidence="1" type="primary">bioF</name>
    <name type="ordered locus">HEAR1669</name>
</gene>
<keyword id="KW-0093">Biotin biosynthesis</keyword>
<keyword id="KW-0663">Pyridoxal phosphate</keyword>
<keyword id="KW-1185">Reference proteome</keyword>
<keyword id="KW-0808">Transferase</keyword>
<protein>
    <recommendedName>
        <fullName evidence="1">8-amino-7-oxononanoate synthase</fullName>
        <shortName evidence="1">AONS</shortName>
        <ecNumber evidence="1">2.3.1.47</ecNumber>
    </recommendedName>
    <alternativeName>
        <fullName evidence="1">7-keto-8-amino-pelargonic acid synthase</fullName>
        <shortName evidence="1">7-KAP synthase</shortName>
        <shortName evidence="1">KAPA synthase</shortName>
    </alternativeName>
    <alternativeName>
        <fullName evidence="1">8-amino-7-ketopelargonate synthase</fullName>
    </alternativeName>
</protein>
<reference key="1">
    <citation type="journal article" date="2007" name="PLoS Genet.">
        <title>A tale of two oxidation states: bacterial colonization of arsenic-rich environments.</title>
        <authorList>
            <person name="Muller D."/>
            <person name="Medigue C."/>
            <person name="Koechler S."/>
            <person name="Barbe V."/>
            <person name="Barakat M."/>
            <person name="Talla E."/>
            <person name="Bonnefoy V."/>
            <person name="Krin E."/>
            <person name="Arsene-Ploetze F."/>
            <person name="Carapito C."/>
            <person name="Chandler M."/>
            <person name="Cournoyer B."/>
            <person name="Cruveiller S."/>
            <person name="Dossat C."/>
            <person name="Duval S."/>
            <person name="Heymann M."/>
            <person name="Leize E."/>
            <person name="Lieutaud A."/>
            <person name="Lievremont D."/>
            <person name="Makita Y."/>
            <person name="Mangenot S."/>
            <person name="Nitschke W."/>
            <person name="Ortet P."/>
            <person name="Perdrial N."/>
            <person name="Schoepp B."/>
            <person name="Siguier P."/>
            <person name="Simeonova D.D."/>
            <person name="Rouy Z."/>
            <person name="Segurens B."/>
            <person name="Turlin E."/>
            <person name="Vallenet D."/>
            <person name="van Dorsselaer A."/>
            <person name="Weiss S."/>
            <person name="Weissenbach J."/>
            <person name="Lett M.-C."/>
            <person name="Danchin A."/>
            <person name="Bertin P.N."/>
        </authorList>
    </citation>
    <scope>NUCLEOTIDE SEQUENCE [LARGE SCALE GENOMIC DNA]</scope>
    <source>
        <strain>ULPAs1</strain>
    </source>
</reference>
<comment type="function">
    <text evidence="1">Catalyzes the decarboxylative condensation of pimeloyl-[acyl-carrier protein] and L-alanine to produce 8-amino-7-oxononanoate (AON), [acyl-carrier protein], and carbon dioxide.</text>
</comment>
<comment type="catalytic activity">
    <reaction evidence="1">
        <text>6-carboxyhexanoyl-[ACP] + L-alanine + H(+) = (8S)-8-amino-7-oxononanoate + holo-[ACP] + CO2</text>
        <dbReference type="Rhea" id="RHEA:42288"/>
        <dbReference type="Rhea" id="RHEA-COMP:9685"/>
        <dbReference type="Rhea" id="RHEA-COMP:9955"/>
        <dbReference type="ChEBI" id="CHEBI:15378"/>
        <dbReference type="ChEBI" id="CHEBI:16526"/>
        <dbReference type="ChEBI" id="CHEBI:57972"/>
        <dbReference type="ChEBI" id="CHEBI:64479"/>
        <dbReference type="ChEBI" id="CHEBI:78846"/>
        <dbReference type="ChEBI" id="CHEBI:149468"/>
        <dbReference type="EC" id="2.3.1.47"/>
    </reaction>
</comment>
<comment type="cofactor">
    <cofactor evidence="1">
        <name>pyridoxal 5'-phosphate</name>
        <dbReference type="ChEBI" id="CHEBI:597326"/>
    </cofactor>
</comment>
<comment type="pathway">
    <text evidence="1">Cofactor biosynthesis; biotin biosynthesis.</text>
</comment>
<comment type="subunit">
    <text evidence="1">Homodimer.</text>
</comment>
<comment type="similarity">
    <text evidence="1">Belongs to the class-II pyridoxal-phosphate-dependent aminotransferase family. BioF subfamily.</text>
</comment>
<dbReference type="EC" id="2.3.1.47" evidence="1"/>
<dbReference type="EMBL" id="CU207211">
    <property type="protein sequence ID" value="CAL61826.1"/>
    <property type="molecule type" value="Genomic_DNA"/>
</dbReference>
<dbReference type="SMR" id="A4G5N9"/>
<dbReference type="STRING" id="204773.HEAR1669"/>
<dbReference type="KEGG" id="har:HEAR1669"/>
<dbReference type="eggNOG" id="COG0156">
    <property type="taxonomic scope" value="Bacteria"/>
</dbReference>
<dbReference type="HOGENOM" id="CLU_015846_11_0_4"/>
<dbReference type="OrthoDB" id="9807157at2"/>
<dbReference type="UniPathway" id="UPA00078"/>
<dbReference type="Proteomes" id="UP000006697">
    <property type="component" value="Chromosome"/>
</dbReference>
<dbReference type="GO" id="GO:0008710">
    <property type="term" value="F:8-amino-7-oxononanoate synthase activity"/>
    <property type="evidence" value="ECO:0007669"/>
    <property type="project" value="UniProtKB-UniRule"/>
</dbReference>
<dbReference type="GO" id="GO:0030170">
    <property type="term" value="F:pyridoxal phosphate binding"/>
    <property type="evidence" value="ECO:0007669"/>
    <property type="project" value="UniProtKB-UniRule"/>
</dbReference>
<dbReference type="GO" id="GO:0009102">
    <property type="term" value="P:biotin biosynthetic process"/>
    <property type="evidence" value="ECO:0007669"/>
    <property type="project" value="UniProtKB-UniRule"/>
</dbReference>
<dbReference type="CDD" id="cd06454">
    <property type="entry name" value="KBL_like"/>
    <property type="match status" value="1"/>
</dbReference>
<dbReference type="Gene3D" id="3.90.1150.10">
    <property type="entry name" value="Aspartate Aminotransferase, domain 1"/>
    <property type="match status" value="1"/>
</dbReference>
<dbReference type="Gene3D" id="3.40.640.10">
    <property type="entry name" value="Type I PLP-dependent aspartate aminotransferase-like (Major domain)"/>
    <property type="match status" value="1"/>
</dbReference>
<dbReference type="HAMAP" id="MF_01693">
    <property type="entry name" value="BioF_aminotrans_2"/>
    <property type="match status" value="1"/>
</dbReference>
<dbReference type="InterPro" id="IPR004839">
    <property type="entry name" value="Aminotransferase_I/II_large"/>
</dbReference>
<dbReference type="InterPro" id="IPR050087">
    <property type="entry name" value="AON_synthase_class-II"/>
</dbReference>
<dbReference type="InterPro" id="IPR004723">
    <property type="entry name" value="AONS_Archaea/Proteobacteria"/>
</dbReference>
<dbReference type="InterPro" id="IPR022834">
    <property type="entry name" value="AONS_Proteobacteria"/>
</dbReference>
<dbReference type="InterPro" id="IPR015424">
    <property type="entry name" value="PyrdxlP-dep_Trfase"/>
</dbReference>
<dbReference type="InterPro" id="IPR015421">
    <property type="entry name" value="PyrdxlP-dep_Trfase_major"/>
</dbReference>
<dbReference type="InterPro" id="IPR015422">
    <property type="entry name" value="PyrdxlP-dep_Trfase_small"/>
</dbReference>
<dbReference type="NCBIfam" id="TIGR00858">
    <property type="entry name" value="bioF"/>
    <property type="match status" value="1"/>
</dbReference>
<dbReference type="PANTHER" id="PTHR13693:SF100">
    <property type="entry name" value="8-AMINO-7-OXONONANOATE SYNTHASE"/>
    <property type="match status" value="1"/>
</dbReference>
<dbReference type="PANTHER" id="PTHR13693">
    <property type="entry name" value="CLASS II AMINOTRANSFERASE/8-AMINO-7-OXONONANOATE SYNTHASE"/>
    <property type="match status" value="1"/>
</dbReference>
<dbReference type="Pfam" id="PF00155">
    <property type="entry name" value="Aminotran_1_2"/>
    <property type="match status" value="1"/>
</dbReference>
<dbReference type="SUPFAM" id="SSF53383">
    <property type="entry name" value="PLP-dependent transferases"/>
    <property type="match status" value="1"/>
</dbReference>
<sequence length="388" mass="41671">MIRETLTTELAALKKQGLQRQRRTLQTPCGVRIEVDGRSLLSFCSNDYLGLAAEPTLIDAAREAALRWGVGSGSSHLVSGHFTPHEELEHKLASFVGGERALYFSTGYMANLGVVPALVGRGDAVFADKLNHASLIDAVQLSRADHQRYPHGDLTALERQLSASKAKRKLILTDAVFSMDGDLAPLTQLLELAERYDAWLMVDDAHGFGILGPQGRGTLVQYGIVLAEHPRLLYMGTLGKAAGVSGAFIAGAEEVIEWLLQRARTYIFTTASSPMLAATLLKSLDLIAGADGDARRSQLQLLIARLQDGLQGSRWQLLPSPTAIQAIIIGENDAALRVAAALAEQGLWVPAIRPPTVPKGTARLRITLSAAHSLADVDRLLAALQAAQ</sequence>
<evidence type="ECO:0000255" key="1">
    <source>
        <dbReference type="HAMAP-Rule" id="MF_01693"/>
    </source>
</evidence>
<proteinExistence type="inferred from homology"/>
<organism>
    <name type="scientific">Herminiimonas arsenicoxydans</name>
    <dbReference type="NCBI Taxonomy" id="204773"/>
    <lineage>
        <taxon>Bacteria</taxon>
        <taxon>Pseudomonadati</taxon>
        <taxon>Pseudomonadota</taxon>
        <taxon>Betaproteobacteria</taxon>
        <taxon>Burkholderiales</taxon>
        <taxon>Oxalobacteraceae</taxon>
        <taxon>Herminiimonas</taxon>
    </lineage>
</organism>
<accession>A4G5N9</accession>